<protein>
    <recommendedName>
        <fullName>Beta-casein</fullName>
    </recommendedName>
</protein>
<gene>
    <name type="primary">Csn2</name>
    <name type="synonym">Csnb</name>
</gene>
<reference key="1">
    <citation type="journal article" date="1982" name="Nucleic Acids Res.">
        <title>Rat beta casein cDNA: sequence analysis and evolutionary comparisons.</title>
        <authorList>
            <person name="Blackburn D.E."/>
            <person name="Hobbs A.A."/>
            <person name="Rosen J.M."/>
        </authorList>
    </citation>
    <scope>NUCLEOTIDE SEQUENCE [MRNA]</scope>
</reference>
<reference key="2">
    <citation type="journal article" date="1985" name="J. Biol. Chem.">
        <title>The rat casein multigene family. Fine structure and evolution of the beta-casein gene.</title>
        <authorList>
            <person name="Jones W.K."/>
            <person name="Yu-Lee L."/>
            <person name="Clift S.M."/>
            <person name="Brown T.L."/>
            <person name="Rosen J.M."/>
        </authorList>
    </citation>
    <scope>NUCLEOTIDE SEQUENCE [GENOMIC DNA]</scope>
    <source>
        <strain>Sprague-Dawley</strain>
    </source>
</reference>
<accession>P02665</accession>
<organism>
    <name type="scientific">Rattus norvegicus</name>
    <name type="common">Rat</name>
    <dbReference type="NCBI Taxonomy" id="10116"/>
    <lineage>
        <taxon>Eukaryota</taxon>
        <taxon>Metazoa</taxon>
        <taxon>Chordata</taxon>
        <taxon>Craniata</taxon>
        <taxon>Vertebrata</taxon>
        <taxon>Euteleostomi</taxon>
        <taxon>Mammalia</taxon>
        <taxon>Eutheria</taxon>
        <taxon>Euarchontoglires</taxon>
        <taxon>Glires</taxon>
        <taxon>Rodentia</taxon>
        <taxon>Myomorpha</taxon>
        <taxon>Muroidea</taxon>
        <taxon>Muridae</taxon>
        <taxon>Murinae</taxon>
        <taxon>Rattus</taxon>
    </lineage>
</organism>
<keyword id="KW-0494">Milk protein</keyword>
<keyword id="KW-0597">Phosphoprotein</keyword>
<keyword id="KW-1185">Reference proteome</keyword>
<keyword id="KW-0964">Secreted</keyword>
<keyword id="KW-0732">Signal</keyword>
<dbReference type="EMBL" id="J00711">
    <property type="protein sequence ID" value="AAA40878.1"/>
    <property type="molecule type" value="mRNA"/>
</dbReference>
<dbReference type="EMBL" id="M11178">
    <property type="protein sequence ID" value="AAA40879.1"/>
    <property type="molecule type" value="Genomic_DNA"/>
</dbReference>
<dbReference type="EMBL" id="M11175">
    <property type="protein sequence ID" value="AAA40879.1"/>
    <property type="status" value="JOINED"/>
    <property type="molecule type" value="Genomic_DNA"/>
</dbReference>
<dbReference type="EMBL" id="M11176">
    <property type="protein sequence ID" value="AAA40879.1"/>
    <property type="status" value="JOINED"/>
    <property type="molecule type" value="Genomic_DNA"/>
</dbReference>
<dbReference type="EMBL" id="M11177">
    <property type="protein sequence ID" value="AAA40879.1"/>
    <property type="status" value="JOINED"/>
    <property type="molecule type" value="Genomic_DNA"/>
</dbReference>
<dbReference type="PIR" id="A93420">
    <property type="entry name" value="KBRT"/>
</dbReference>
<dbReference type="RefSeq" id="NP_058816.2">
    <property type="nucleotide sequence ID" value="NM_017120.3"/>
</dbReference>
<dbReference type="SMR" id="P02665"/>
<dbReference type="FunCoup" id="P02665">
    <property type="interactions" value="119"/>
</dbReference>
<dbReference type="STRING" id="10116.ENSRNOP00000057016"/>
<dbReference type="BindingDB" id="P02665"/>
<dbReference type="ChEMBL" id="CHEMBL2210"/>
<dbReference type="DrugCentral" id="P02665"/>
<dbReference type="Allergome" id="2151">
    <property type="allergen name" value="Rat n 8"/>
</dbReference>
<dbReference type="GlyGen" id="P02665">
    <property type="glycosylation" value="1 site"/>
</dbReference>
<dbReference type="PhosphoSitePlus" id="P02665"/>
<dbReference type="PaxDb" id="10116-ENSRNOP00000057016"/>
<dbReference type="GeneID" id="29173"/>
<dbReference type="KEGG" id="rno:29173"/>
<dbReference type="UCSC" id="RGD:61981">
    <property type="organism name" value="rat"/>
</dbReference>
<dbReference type="AGR" id="RGD:61981"/>
<dbReference type="CTD" id="1447"/>
<dbReference type="RGD" id="61981">
    <property type="gene designation" value="Csn2"/>
</dbReference>
<dbReference type="eggNOG" id="ENOG502RU0R">
    <property type="taxonomic scope" value="Eukaryota"/>
</dbReference>
<dbReference type="InParanoid" id="P02665"/>
<dbReference type="OrthoDB" id="9838331at2759"/>
<dbReference type="PhylomeDB" id="P02665"/>
<dbReference type="PRO" id="PR:P02665"/>
<dbReference type="Proteomes" id="UP000002494">
    <property type="component" value="Unplaced"/>
</dbReference>
<dbReference type="GO" id="GO:0005576">
    <property type="term" value="C:extracellular region"/>
    <property type="evidence" value="ECO:0000266"/>
    <property type="project" value="RGD"/>
</dbReference>
<dbReference type="GO" id="GO:0005615">
    <property type="term" value="C:extracellular space"/>
    <property type="evidence" value="ECO:0000266"/>
    <property type="project" value="RGD"/>
</dbReference>
<dbReference type="GO" id="GO:0004869">
    <property type="term" value="F:cysteine-type endopeptidase inhibitor activity"/>
    <property type="evidence" value="ECO:0000266"/>
    <property type="project" value="RGD"/>
</dbReference>
<dbReference type="GO" id="GO:0007595">
    <property type="term" value="P:lactation"/>
    <property type="evidence" value="ECO:0000266"/>
    <property type="project" value="RGD"/>
</dbReference>
<dbReference type="InterPro" id="IPR001588">
    <property type="entry name" value="Casein"/>
</dbReference>
<dbReference type="InterPro" id="IPR016345">
    <property type="entry name" value="Casein_beta"/>
</dbReference>
<dbReference type="InterPro" id="IPR031305">
    <property type="entry name" value="Casein_CS"/>
</dbReference>
<dbReference type="PANTHER" id="PTHR11500">
    <property type="entry name" value="BETA CASEIN"/>
    <property type="match status" value="1"/>
</dbReference>
<dbReference type="PANTHER" id="PTHR11500:SF0">
    <property type="entry name" value="BETA-CASEIN"/>
    <property type="match status" value="1"/>
</dbReference>
<dbReference type="Pfam" id="PF00363">
    <property type="entry name" value="Casein"/>
    <property type="match status" value="1"/>
</dbReference>
<dbReference type="PIRSF" id="PIRSF002372">
    <property type="entry name" value="Beta-casein"/>
    <property type="match status" value="1"/>
</dbReference>
<dbReference type="PROSITE" id="PS00306">
    <property type="entry name" value="CASEIN_ALPHA_BETA"/>
    <property type="match status" value="1"/>
</dbReference>
<evidence type="ECO:0000250" key="1"/>
<evidence type="ECO:0000250" key="2">
    <source>
        <dbReference type="UniProtKB" id="P05814"/>
    </source>
</evidence>
<evidence type="ECO:0000250" key="3">
    <source>
        <dbReference type="UniProtKB" id="Q9GKK3"/>
    </source>
</evidence>
<evidence type="ECO:0000305" key="4"/>
<comment type="function">
    <text>Important role in determination of the surface properties of the casein micelles.</text>
</comment>
<comment type="subcellular location">
    <subcellularLocation>
        <location>Secreted</location>
    </subcellularLocation>
</comment>
<comment type="tissue specificity">
    <text>Mammary gland specific. Secreted in milk.</text>
</comment>
<comment type="similarity">
    <text evidence="4">Belongs to the beta-casein family.</text>
</comment>
<name>CASB_RAT</name>
<feature type="signal peptide" evidence="1">
    <location>
        <begin position="1"/>
        <end position="15"/>
    </location>
</feature>
<feature type="chain" id="PRO_0000004480" description="Beta-casein">
    <location>
        <begin position="16"/>
        <end position="231"/>
    </location>
</feature>
<feature type="modified residue" description="Phosphoserine" evidence="3">
    <location>
        <position position="24"/>
    </location>
</feature>
<feature type="modified residue" description="Phosphothreonine" evidence="3">
    <location>
        <position position="27"/>
    </location>
</feature>
<feature type="modified residue" description="Phosphoserine" evidence="2">
    <location>
        <position position="29"/>
    </location>
</feature>
<feature type="modified residue" description="Phosphoserine" evidence="2">
    <location>
        <position position="31"/>
    </location>
</feature>
<feature type="modified residue" description="Phosphoserine" evidence="2">
    <location>
        <position position="32"/>
    </location>
</feature>
<feature type="sequence conflict" description="In Ref. 1; AAA40878." evidence="4" ref="1">
    <original>Q</original>
    <variation>K</variation>
    <location>
        <position position="71"/>
    </location>
</feature>
<feature type="sequence conflict" description="In Ref. 1; AAA40878." evidence="4" ref="1">
    <original>V</original>
    <variation>D</variation>
    <location>
        <position position="100"/>
    </location>
</feature>
<feature type="sequence conflict" description="In Ref. 2; AAA40879." evidence="4" ref="2">
    <original>K</original>
    <variation>E</variation>
    <location>
        <position position="113"/>
    </location>
</feature>
<feature type="sequence conflict" description="In Ref. 2; AAA40879." evidence="4" ref="2">
    <original>K</original>
    <variation>E</variation>
    <location>
        <position position="115"/>
    </location>
</feature>
<sequence length="231" mass="25369">MKVFILACLVALALAREKDAFTVSSETGSISSEESVEHINEKLQKVKLMGQVQSEDVLQNKFHSGIQSEPQAIPYAQTISCSPIPQNIQPIAQPPVVPTVGPIISPELESFLKAKATVLPKHKQMPFLNSETVLRLFNSQIPSLDLANLHLPQSPAQLQAQIVQAFPQTPAVVSSQPQLSHPQSKSQYLVQQLAPLFQQGMPVQDLLQYLDLLLNPTLQFLATQQLHSTSV</sequence>
<proteinExistence type="evidence at transcript level"/>